<protein>
    <recommendedName>
        <fullName evidence="1">Nucleoid-associated protein Caur_0522</fullName>
    </recommendedName>
</protein>
<reference key="1">
    <citation type="journal article" date="2011" name="BMC Genomics">
        <title>Complete genome sequence of the filamentous anoxygenic phototrophic bacterium Chloroflexus aurantiacus.</title>
        <authorList>
            <person name="Tang K.H."/>
            <person name="Barry K."/>
            <person name="Chertkov O."/>
            <person name="Dalin E."/>
            <person name="Han C.S."/>
            <person name="Hauser L.J."/>
            <person name="Honchak B.M."/>
            <person name="Karbach L.E."/>
            <person name="Land M.L."/>
            <person name="Lapidus A."/>
            <person name="Larimer F.W."/>
            <person name="Mikhailova N."/>
            <person name="Pitluck S."/>
            <person name="Pierson B.K."/>
            <person name="Blankenship R.E."/>
        </authorList>
    </citation>
    <scope>NUCLEOTIDE SEQUENCE [LARGE SCALE GENOMIC DNA]</scope>
    <source>
        <strain>ATCC 29366 / DSM 635 / J-10-fl</strain>
    </source>
</reference>
<organism>
    <name type="scientific">Chloroflexus aurantiacus (strain ATCC 29366 / DSM 635 / J-10-fl)</name>
    <dbReference type="NCBI Taxonomy" id="324602"/>
    <lineage>
        <taxon>Bacteria</taxon>
        <taxon>Bacillati</taxon>
        <taxon>Chloroflexota</taxon>
        <taxon>Chloroflexia</taxon>
        <taxon>Chloroflexales</taxon>
        <taxon>Chloroflexineae</taxon>
        <taxon>Chloroflexaceae</taxon>
        <taxon>Chloroflexus</taxon>
    </lineage>
</organism>
<comment type="function">
    <text evidence="1">Binds to DNA and alters its conformation. May be involved in regulation of gene expression, nucleoid organization and DNA protection.</text>
</comment>
<comment type="subunit">
    <text evidence="1">Homodimer.</text>
</comment>
<comment type="subcellular location">
    <subcellularLocation>
        <location evidence="1">Cytoplasm</location>
        <location evidence="1">Nucleoid</location>
    </subcellularLocation>
</comment>
<comment type="similarity">
    <text evidence="1">Belongs to the YbaB/EbfC family.</text>
</comment>
<gene>
    <name type="ordered locus">Caur_0522</name>
</gene>
<keyword id="KW-0963">Cytoplasm</keyword>
<keyword id="KW-0238">DNA-binding</keyword>
<keyword id="KW-1185">Reference proteome</keyword>
<accession>A9WEA9</accession>
<sequence>MNQRQLMQMAQQMQRQMQKVQEELAATIVEGTAGGGAITVKMNGHREVQSITISPEVVDPDDVEMLQDLLLVAINDASRKAQQLAEERMQPLTGGLKGLF</sequence>
<feature type="chain" id="PRO_1000078751" description="Nucleoid-associated protein Caur_0522">
    <location>
        <begin position="1"/>
        <end position="100"/>
    </location>
</feature>
<name>Y522_CHLAA</name>
<proteinExistence type="inferred from homology"/>
<evidence type="ECO:0000255" key="1">
    <source>
        <dbReference type="HAMAP-Rule" id="MF_00274"/>
    </source>
</evidence>
<dbReference type="EMBL" id="CP000909">
    <property type="protein sequence ID" value="ABY33769.1"/>
    <property type="molecule type" value="Genomic_DNA"/>
</dbReference>
<dbReference type="RefSeq" id="WP_012256425.1">
    <property type="nucleotide sequence ID" value="NC_010175.1"/>
</dbReference>
<dbReference type="RefSeq" id="YP_001634158.1">
    <property type="nucleotide sequence ID" value="NC_010175.1"/>
</dbReference>
<dbReference type="SMR" id="A9WEA9"/>
<dbReference type="FunCoup" id="A9WEA9">
    <property type="interactions" value="254"/>
</dbReference>
<dbReference type="STRING" id="324602.Caur_0522"/>
<dbReference type="EnsemblBacteria" id="ABY33769">
    <property type="protein sequence ID" value="ABY33769"/>
    <property type="gene ID" value="Caur_0522"/>
</dbReference>
<dbReference type="KEGG" id="cau:Caur_0522"/>
<dbReference type="PATRIC" id="fig|324602.8.peg.592"/>
<dbReference type="eggNOG" id="COG0718">
    <property type="taxonomic scope" value="Bacteria"/>
</dbReference>
<dbReference type="HOGENOM" id="CLU_140930_1_0_0"/>
<dbReference type="InParanoid" id="A9WEA9"/>
<dbReference type="Proteomes" id="UP000002008">
    <property type="component" value="Chromosome"/>
</dbReference>
<dbReference type="GO" id="GO:0043590">
    <property type="term" value="C:bacterial nucleoid"/>
    <property type="evidence" value="ECO:0007669"/>
    <property type="project" value="UniProtKB-UniRule"/>
</dbReference>
<dbReference type="GO" id="GO:0005829">
    <property type="term" value="C:cytosol"/>
    <property type="evidence" value="ECO:0000318"/>
    <property type="project" value="GO_Central"/>
</dbReference>
<dbReference type="GO" id="GO:0003677">
    <property type="term" value="F:DNA binding"/>
    <property type="evidence" value="ECO:0000318"/>
    <property type="project" value="GO_Central"/>
</dbReference>
<dbReference type="FunFam" id="3.30.1310.10:FF:000011">
    <property type="entry name" value="Nucleoid-associated protein D6716_02630"/>
    <property type="match status" value="1"/>
</dbReference>
<dbReference type="Gene3D" id="3.30.1310.10">
    <property type="entry name" value="Nucleoid-associated protein YbaB-like domain"/>
    <property type="match status" value="1"/>
</dbReference>
<dbReference type="HAMAP" id="MF_00274">
    <property type="entry name" value="DNA_YbaB_EbfC"/>
    <property type="match status" value="1"/>
</dbReference>
<dbReference type="InterPro" id="IPR036894">
    <property type="entry name" value="YbaB-like_sf"/>
</dbReference>
<dbReference type="InterPro" id="IPR004401">
    <property type="entry name" value="YbaB/EbfC"/>
</dbReference>
<dbReference type="NCBIfam" id="TIGR00103">
    <property type="entry name" value="DNA_YbaB_EbfC"/>
    <property type="match status" value="1"/>
</dbReference>
<dbReference type="PANTHER" id="PTHR33449">
    <property type="entry name" value="NUCLEOID-ASSOCIATED PROTEIN YBAB"/>
    <property type="match status" value="1"/>
</dbReference>
<dbReference type="PANTHER" id="PTHR33449:SF1">
    <property type="entry name" value="NUCLEOID-ASSOCIATED PROTEIN YBAB"/>
    <property type="match status" value="1"/>
</dbReference>
<dbReference type="Pfam" id="PF02575">
    <property type="entry name" value="YbaB_DNA_bd"/>
    <property type="match status" value="1"/>
</dbReference>
<dbReference type="PIRSF" id="PIRSF004555">
    <property type="entry name" value="UCP004555"/>
    <property type="match status" value="1"/>
</dbReference>
<dbReference type="SUPFAM" id="SSF82607">
    <property type="entry name" value="YbaB-like"/>
    <property type="match status" value="1"/>
</dbReference>